<comment type="function">
    <text evidence="1">Catalyzes the attachment of alanine to tRNA(Ala) in a two-step reaction: alanine is first activated by ATP to form Ala-AMP and then transferred to the acceptor end of tRNA(Ala). Also edits incorrectly charged Ser-tRNA(Ala) and Gly-tRNA(Ala) via its editing domain.</text>
</comment>
<comment type="catalytic activity">
    <reaction evidence="1">
        <text>tRNA(Ala) + L-alanine + ATP = L-alanyl-tRNA(Ala) + AMP + diphosphate</text>
        <dbReference type="Rhea" id="RHEA:12540"/>
        <dbReference type="Rhea" id="RHEA-COMP:9657"/>
        <dbReference type="Rhea" id="RHEA-COMP:9923"/>
        <dbReference type="ChEBI" id="CHEBI:30616"/>
        <dbReference type="ChEBI" id="CHEBI:33019"/>
        <dbReference type="ChEBI" id="CHEBI:57972"/>
        <dbReference type="ChEBI" id="CHEBI:78442"/>
        <dbReference type="ChEBI" id="CHEBI:78497"/>
        <dbReference type="ChEBI" id="CHEBI:456215"/>
        <dbReference type="EC" id="6.1.1.7"/>
    </reaction>
</comment>
<comment type="cofactor">
    <cofactor evidence="1">
        <name>Zn(2+)</name>
        <dbReference type="ChEBI" id="CHEBI:29105"/>
    </cofactor>
    <text evidence="1">Binds 1 zinc ion per subunit.</text>
</comment>
<comment type="subcellular location">
    <subcellularLocation>
        <location evidence="1">Cytoplasm</location>
    </subcellularLocation>
</comment>
<comment type="domain">
    <text evidence="1">Consists of three domains; the N-terminal catalytic domain, the editing domain and the C-terminal C-Ala domain. The editing domain removes incorrectly charged amino acids, while the C-Ala domain, along with tRNA(Ala), serves as a bridge to cooperatively bring together the editing and aminoacylation centers thus stimulating deacylation of misacylated tRNAs.</text>
</comment>
<comment type="similarity">
    <text evidence="1">Belongs to the class-II aminoacyl-tRNA synthetase family.</text>
</comment>
<evidence type="ECO:0000255" key="1">
    <source>
        <dbReference type="HAMAP-Rule" id="MF_00036"/>
    </source>
</evidence>
<gene>
    <name evidence="1" type="primary">alaS</name>
    <name type="ordered locus">A1E_05485</name>
</gene>
<proteinExistence type="inferred from homology"/>
<dbReference type="EC" id="6.1.1.7" evidence="1"/>
<dbReference type="EMBL" id="CP000409">
    <property type="protein sequence ID" value="ABV74011.1"/>
    <property type="molecule type" value="Genomic_DNA"/>
</dbReference>
<dbReference type="RefSeq" id="WP_012149206.1">
    <property type="nucleotide sequence ID" value="NC_009879.1"/>
</dbReference>
<dbReference type="SMR" id="A8F078"/>
<dbReference type="STRING" id="293613.A1E_05485"/>
<dbReference type="KEGG" id="rcm:A1E_05485"/>
<dbReference type="eggNOG" id="COG0013">
    <property type="taxonomic scope" value="Bacteria"/>
</dbReference>
<dbReference type="HOGENOM" id="CLU_004485_1_1_5"/>
<dbReference type="Proteomes" id="UP000007056">
    <property type="component" value="Chromosome"/>
</dbReference>
<dbReference type="GO" id="GO:0005829">
    <property type="term" value="C:cytosol"/>
    <property type="evidence" value="ECO:0007669"/>
    <property type="project" value="TreeGrafter"/>
</dbReference>
<dbReference type="GO" id="GO:0004813">
    <property type="term" value="F:alanine-tRNA ligase activity"/>
    <property type="evidence" value="ECO:0007669"/>
    <property type="project" value="UniProtKB-UniRule"/>
</dbReference>
<dbReference type="GO" id="GO:0002161">
    <property type="term" value="F:aminoacyl-tRNA deacylase activity"/>
    <property type="evidence" value="ECO:0007669"/>
    <property type="project" value="TreeGrafter"/>
</dbReference>
<dbReference type="GO" id="GO:0005524">
    <property type="term" value="F:ATP binding"/>
    <property type="evidence" value="ECO:0007669"/>
    <property type="project" value="UniProtKB-UniRule"/>
</dbReference>
<dbReference type="GO" id="GO:0000049">
    <property type="term" value="F:tRNA binding"/>
    <property type="evidence" value="ECO:0007669"/>
    <property type="project" value="UniProtKB-KW"/>
</dbReference>
<dbReference type="GO" id="GO:0008270">
    <property type="term" value="F:zinc ion binding"/>
    <property type="evidence" value="ECO:0007669"/>
    <property type="project" value="UniProtKB-UniRule"/>
</dbReference>
<dbReference type="GO" id="GO:0006419">
    <property type="term" value="P:alanyl-tRNA aminoacylation"/>
    <property type="evidence" value="ECO:0007669"/>
    <property type="project" value="UniProtKB-UniRule"/>
</dbReference>
<dbReference type="GO" id="GO:0045892">
    <property type="term" value="P:negative regulation of DNA-templated transcription"/>
    <property type="evidence" value="ECO:0007669"/>
    <property type="project" value="TreeGrafter"/>
</dbReference>
<dbReference type="CDD" id="cd00673">
    <property type="entry name" value="AlaRS_core"/>
    <property type="match status" value="1"/>
</dbReference>
<dbReference type="FunFam" id="3.10.310.40:FF:000001">
    <property type="entry name" value="Alanine--tRNA ligase"/>
    <property type="match status" value="1"/>
</dbReference>
<dbReference type="FunFam" id="3.30.54.20:FF:000001">
    <property type="entry name" value="Alanine--tRNA ligase"/>
    <property type="match status" value="1"/>
</dbReference>
<dbReference type="FunFam" id="3.30.930.10:FF:000004">
    <property type="entry name" value="Alanine--tRNA ligase"/>
    <property type="match status" value="1"/>
</dbReference>
<dbReference type="FunFam" id="3.30.980.10:FF:000004">
    <property type="entry name" value="Alanine--tRNA ligase, cytoplasmic"/>
    <property type="match status" value="1"/>
</dbReference>
<dbReference type="Gene3D" id="2.40.30.130">
    <property type="match status" value="1"/>
</dbReference>
<dbReference type="Gene3D" id="3.10.310.40">
    <property type="match status" value="1"/>
</dbReference>
<dbReference type="Gene3D" id="3.30.54.20">
    <property type="match status" value="1"/>
</dbReference>
<dbReference type="Gene3D" id="6.10.250.550">
    <property type="match status" value="1"/>
</dbReference>
<dbReference type="Gene3D" id="3.30.930.10">
    <property type="entry name" value="Bira Bifunctional Protein, Domain 2"/>
    <property type="match status" value="1"/>
</dbReference>
<dbReference type="Gene3D" id="3.30.980.10">
    <property type="entry name" value="Threonyl-trna Synthetase, Chain A, domain 2"/>
    <property type="match status" value="1"/>
</dbReference>
<dbReference type="HAMAP" id="MF_00036_B">
    <property type="entry name" value="Ala_tRNA_synth_B"/>
    <property type="match status" value="1"/>
</dbReference>
<dbReference type="InterPro" id="IPR045864">
    <property type="entry name" value="aa-tRNA-synth_II/BPL/LPL"/>
</dbReference>
<dbReference type="InterPro" id="IPR002318">
    <property type="entry name" value="Ala-tRNA-lgiase_IIc"/>
</dbReference>
<dbReference type="InterPro" id="IPR018162">
    <property type="entry name" value="Ala-tRNA-ligase_IIc_anticod-bd"/>
</dbReference>
<dbReference type="InterPro" id="IPR018165">
    <property type="entry name" value="Ala-tRNA-synth_IIc_core"/>
</dbReference>
<dbReference type="InterPro" id="IPR018164">
    <property type="entry name" value="Ala-tRNA-synth_IIc_N"/>
</dbReference>
<dbReference type="InterPro" id="IPR050058">
    <property type="entry name" value="Ala-tRNA_ligase"/>
</dbReference>
<dbReference type="InterPro" id="IPR023033">
    <property type="entry name" value="Ala_tRNA_ligase_euk/bac"/>
</dbReference>
<dbReference type="InterPro" id="IPR003156">
    <property type="entry name" value="DHHA1_dom"/>
</dbReference>
<dbReference type="InterPro" id="IPR018163">
    <property type="entry name" value="Thr/Ala-tRNA-synth_IIc_edit"/>
</dbReference>
<dbReference type="InterPro" id="IPR009000">
    <property type="entry name" value="Transl_B-barrel_sf"/>
</dbReference>
<dbReference type="InterPro" id="IPR012947">
    <property type="entry name" value="tRNA_SAD"/>
</dbReference>
<dbReference type="NCBIfam" id="TIGR00344">
    <property type="entry name" value="alaS"/>
    <property type="match status" value="1"/>
</dbReference>
<dbReference type="PANTHER" id="PTHR11777:SF9">
    <property type="entry name" value="ALANINE--TRNA LIGASE, CYTOPLASMIC"/>
    <property type="match status" value="1"/>
</dbReference>
<dbReference type="PANTHER" id="PTHR11777">
    <property type="entry name" value="ALANYL-TRNA SYNTHETASE"/>
    <property type="match status" value="1"/>
</dbReference>
<dbReference type="Pfam" id="PF02272">
    <property type="entry name" value="DHHA1"/>
    <property type="match status" value="1"/>
</dbReference>
<dbReference type="Pfam" id="PF01411">
    <property type="entry name" value="tRNA-synt_2c"/>
    <property type="match status" value="1"/>
</dbReference>
<dbReference type="Pfam" id="PF07973">
    <property type="entry name" value="tRNA_SAD"/>
    <property type="match status" value="1"/>
</dbReference>
<dbReference type="PRINTS" id="PR00980">
    <property type="entry name" value="TRNASYNTHALA"/>
</dbReference>
<dbReference type="SMART" id="SM00863">
    <property type="entry name" value="tRNA_SAD"/>
    <property type="match status" value="1"/>
</dbReference>
<dbReference type="SUPFAM" id="SSF55681">
    <property type="entry name" value="Class II aaRS and biotin synthetases"/>
    <property type="match status" value="1"/>
</dbReference>
<dbReference type="SUPFAM" id="SSF101353">
    <property type="entry name" value="Putative anticodon-binding domain of alanyl-tRNA synthetase (AlaRS)"/>
    <property type="match status" value="1"/>
</dbReference>
<dbReference type="SUPFAM" id="SSF55186">
    <property type="entry name" value="ThrRS/AlaRS common domain"/>
    <property type="match status" value="1"/>
</dbReference>
<dbReference type="SUPFAM" id="SSF50447">
    <property type="entry name" value="Translation proteins"/>
    <property type="match status" value="1"/>
</dbReference>
<dbReference type="PROSITE" id="PS50860">
    <property type="entry name" value="AA_TRNA_LIGASE_II_ALA"/>
    <property type="match status" value="1"/>
</dbReference>
<organism>
    <name type="scientific">Rickettsia canadensis (strain McKiel)</name>
    <dbReference type="NCBI Taxonomy" id="293613"/>
    <lineage>
        <taxon>Bacteria</taxon>
        <taxon>Pseudomonadati</taxon>
        <taxon>Pseudomonadota</taxon>
        <taxon>Alphaproteobacteria</taxon>
        <taxon>Rickettsiales</taxon>
        <taxon>Rickettsiaceae</taxon>
        <taxon>Rickettsieae</taxon>
        <taxon>Rickettsia</taxon>
        <taxon>belli group</taxon>
    </lineage>
</organism>
<sequence length="878" mass="99492">MTKFTTEEVRSKFITYFKTNNHTHVPASSLIPQNDPSLMFVNSGMVQFKNVFTGQEKRPYNKAVTSQKSLRAGGKHNDLENVGYTARHHTFFEMLGNFSFGDYFKEQAIYYAWNLLTKKFELPKNKLYVTIYHTDDEAASYWKKIAGFGDDRIIRIKTNDNFWSMGDTGPCGPCSEIFYDHGENIYGGLPGTKDEDGDRFIEILNMVFMQYEQVDKDTRIELPQKSIDTGMGLERMTAILQHVNNNYDIDLFQKIIDYTENIVKVKVKGEAKFSYRVIADHLRASSFLIADGVIPSNEGRGYVLRRIMRRSMRHAHMLGSKEPLMYKLLPKLVDLMGNIYPELKRSESFISNILEQEEIRFKTTLERGLKLLSEETETLTKGDKLSGEIAFKLYDTYGFPLDLTKDILKNYDISVDHQGFKEQMLAQKERARKSWLGSGEYKTNQLWFDIKEQYGSTEFLGYTLNEAECKIIVLIKDNNLVNNIQETDTQFLLISNQTPFYGESGGQMGDNGTIFAKDSEVEVIDTLKYLGSIIVHKCILKKGKIHVGENANFSIDVKYRQNLRIHHSATHILHAVLHEVLGKHVTQKGSLVAPTYLRFDISYSKAVTNEEITLIEDKVNEIIRANHEVNTTLMATEDAVKQGAMALFGEKYDSEVRVVKMGNNSLELCGGTHVRRLGDIGCFKITNESAIAAGIRRIEAVCGEFVIKLMREKENLLKSVESSLKTNKNELITKVNNILERNKGLEKELEKVHLAHLDLSIDQINKEAEEIKGVKLIYQYIENLNNKVLRQAAENLTKKVEDLIVVYIVGNSDKLSITVAVSKAITDKFNAVNIAKELSLFLGGTGGGGQASLAQAGGHDIGKLNKIHEKLYSLLTVL</sequence>
<accession>A8F078</accession>
<feature type="chain" id="PRO_0000347763" description="Alanine--tRNA ligase">
    <location>
        <begin position="1"/>
        <end position="878"/>
    </location>
</feature>
<feature type="binding site" evidence="1">
    <location>
        <position position="567"/>
    </location>
    <ligand>
        <name>Zn(2+)</name>
        <dbReference type="ChEBI" id="CHEBI:29105"/>
    </ligand>
</feature>
<feature type="binding site" evidence="1">
    <location>
        <position position="571"/>
    </location>
    <ligand>
        <name>Zn(2+)</name>
        <dbReference type="ChEBI" id="CHEBI:29105"/>
    </ligand>
</feature>
<feature type="binding site" evidence="1">
    <location>
        <position position="669"/>
    </location>
    <ligand>
        <name>Zn(2+)</name>
        <dbReference type="ChEBI" id="CHEBI:29105"/>
    </ligand>
</feature>
<feature type="binding site" evidence="1">
    <location>
        <position position="673"/>
    </location>
    <ligand>
        <name>Zn(2+)</name>
        <dbReference type="ChEBI" id="CHEBI:29105"/>
    </ligand>
</feature>
<name>SYA_RICCK</name>
<keyword id="KW-0030">Aminoacyl-tRNA synthetase</keyword>
<keyword id="KW-0067">ATP-binding</keyword>
<keyword id="KW-0963">Cytoplasm</keyword>
<keyword id="KW-0436">Ligase</keyword>
<keyword id="KW-0479">Metal-binding</keyword>
<keyword id="KW-0547">Nucleotide-binding</keyword>
<keyword id="KW-0648">Protein biosynthesis</keyword>
<keyword id="KW-0694">RNA-binding</keyword>
<keyword id="KW-0820">tRNA-binding</keyword>
<keyword id="KW-0862">Zinc</keyword>
<reference key="1">
    <citation type="submission" date="2007-09" db="EMBL/GenBank/DDBJ databases">
        <title>Complete genome sequence of Rickettsia canadensis.</title>
        <authorList>
            <person name="Madan A."/>
            <person name="Fahey J."/>
            <person name="Helton E."/>
            <person name="Ketteman M."/>
            <person name="Madan A."/>
            <person name="Rodrigues S."/>
            <person name="Sanchez A."/>
            <person name="Whiting M."/>
            <person name="Dasch G."/>
            <person name="Eremeeva M."/>
        </authorList>
    </citation>
    <scope>NUCLEOTIDE SEQUENCE [LARGE SCALE GENOMIC DNA]</scope>
    <source>
        <strain>McKiel</strain>
    </source>
</reference>
<protein>
    <recommendedName>
        <fullName evidence="1">Alanine--tRNA ligase</fullName>
        <ecNumber evidence="1">6.1.1.7</ecNumber>
    </recommendedName>
    <alternativeName>
        <fullName evidence="1">Alanyl-tRNA synthetase</fullName>
        <shortName evidence="1">AlaRS</shortName>
    </alternativeName>
</protein>